<gene>
    <name type="primary">arpA</name>
</gene>
<proteinExistence type="evidence at protein level"/>
<organism evidence="9">
    <name type="scientific">Streptomyces griseus</name>
    <dbReference type="NCBI Taxonomy" id="1911"/>
    <lineage>
        <taxon>Bacteria</taxon>
        <taxon>Bacillati</taxon>
        <taxon>Actinomycetota</taxon>
        <taxon>Actinomycetes</taxon>
        <taxon>Kitasatosporales</taxon>
        <taxon>Streptomycetaceae</taxon>
        <taxon>Streptomyces</taxon>
    </lineage>
</organism>
<comment type="function">
    <text evidence="3 7">Represses adpA expression by binding to the promoter region in the absence of A-factor, causing repression of streptomycin production and of sporulation.</text>
</comment>
<comment type="subunit">
    <text evidence="5">Homodimer or multimer. Binds to both DNA and A-factor as a homodimer.</text>
</comment>
<comment type="subcellular location">
    <subcellularLocation>
        <location evidence="4">Cytoplasm</location>
    </subcellularLocation>
</comment>
<comment type="domain">
    <text evidence="6">Binds DNA through its N-terminal H-T-H motif and binds A-factor via its C-terminal region.</text>
</comment>
<accession>Q9ZN78</accession>
<accession>Q54189</accession>
<feature type="chain" id="PRO_0000070576" description="A-factor receptor protein">
    <location>
        <begin position="1"/>
        <end position="276"/>
    </location>
</feature>
<feature type="domain" description="HTH tetR-type" evidence="1">
    <location>
        <begin position="8"/>
        <end position="68"/>
    </location>
</feature>
<feature type="DNA-binding region" description="H-T-H motif" evidence="1">
    <location>
        <begin position="31"/>
        <end position="50"/>
    </location>
</feature>
<feature type="region of interest" description="Disordered" evidence="2">
    <location>
        <begin position="207"/>
        <end position="276"/>
    </location>
</feature>
<feature type="compositionally biased region" description="Basic and acidic residues" evidence="2">
    <location>
        <begin position="207"/>
        <end position="220"/>
    </location>
</feature>
<feature type="compositionally biased region" description="Low complexity" evidence="2">
    <location>
        <begin position="221"/>
        <end position="235"/>
    </location>
</feature>
<feature type="compositionally biased region" description="Gly residues" evidence="2">
    <location>
        <begin position="236"/>
        <end position="257"/>
    </location>
</feature>
<feature type="sequence variant" description="In mutant HO1; lacks DNA-binding activity.">
    <original>P</original>
    <variation>S</variation>
    <location>
        <position position="115"/>
    </location>
</feature>
<feature type="sequence variant" description="In strain: IFO 13350.">
    <original>G</original>
    <variation>E</variation>
    <location>
        <position position="171"/>
    </location>
</feature>
<feature type="sequence variant" description="In strain: IFO 13350.">
    <original>AATDSGS</original>
    <variation>PTSEGGT</variation>
    <location>
        <begin position="229"/>
        <end position="235"/>
    </location>
</feature>
<feature type="sequence variant" description="In strain: IFO 13350.">
    <original>GA</original>
    <variation>VT</variation>
    <location>
        <begin position="255"/>
        <end position="256"/>
    </location>
</feature>
<feature type="sequence variant" description="In strain: IFO 13350.">
    <original>V</original>
    <variation>I</variation>
    <location>
        <position position="274"/>
    </location>
</feature>
<feature type="mutagenesis site" description="Loss of DNA-binding activity." evidence="6">
    <original>V</original>
    <variation>A</variation>
    <location>
        <position position="41"/>
    </location>
</feature>
<feature type="mutagenesis site" description="Loss of A-factor-binding activity." evidence="6">
    <original>W</original>
    <variation>A</variation>
    <location>
        <position position="119"/>
    </location>
</feature>
<feature type="mutagenesis site" description="Loss of both DNA-binding and A-Factor-binding activities." evidence="6">
    <original>E</original>
    <variation>A</variation>
    <location>
        <position position="135"/>
    </location>
</feature>
<feature type="mutagenesis site" description="No loss of DNA-binding or A-factor-binding activities." evidence="6">
    <original>P</original>
    <variation>A</variation>
    <location>
        <position position="138"/>
    </location>
</feature>
<feature type="mutagenesis site" description="No loss of DNA-binding or A-factor-binding activities." evidence="6">
    <original>K</original>
    <variation>A</variation>
    <location>
        <position position="147"/>
    </location>
</feature>
<feature type="mutagenesis site" description="Loss of both DNA-binding and A-factor-binding activities." evidence="6">
    <original>I</original>
    <variation>A</variation>
    <location>
        <position position="149"/>
    </location>
</feature>
<feature type="mutagenesis site" description="Loss of both DNA-binding and A-factor-binding activities." evidence="6">
    <original>G</original>
    <variation>A</variation>
    <location>
        <position position="155"/>
    </location>
</feature>
<feature type="mutagenesis site" description="No loss of DNA-binding or A-factor-binding activities." evidence="6">
    <original>S</original>
    <variation>A</variation>
    <location>
        <position position="160"/>
    </location>
</feature>
<feature type="mutagenesis site" description="No loss of DNA-binding or A-factor-binding activities." evidence="6">
    <original>D</original>
    <variation>A</variation>
    <location>
        <position position="163"/>
    </location>
</feature>
<feature type="mutagenesis site" description="Loss of both DNA-binding and A-factor-binding activities." evidence="6">
    <original>D</original>
    <variation>A</variation>
    <location>
        <position position="168"/>
    </location>
</feature>
<feature type="mutagenesis site" description="No loss of DNA-binding or A-factor-binding activities." evidence="6">
    <original>P</original>
    <variation>A</variation>
    <location>
        <position position="187"/>
    </location>
</feature>
<dbReference type="EMBL" id="D49782">
    <property type="protein sequence ID" value="BAA08617.1"/>
    <property type="molecule type" value="Genomic_DNA"/>
</dbReference>
<dbReference type="EMBL" id="AB021882">
    <property type="protein sequence ID" value="BAA36282.1"/>
    <property type="molecule type" value="Genomic_DNA"/>
</dbReference>
<dbReference type="SMR" id="Q9ZN78"/>
<dbReference type="GO" id="GO:0005737">
    <property type="term" value="C:cytoplasm"/>
    <property type="evidence" value="ECO:0000314"/>
    <property type="project" value="UniProtKB"/>
</dbReference>
<dbReference type="GO" id="GO:0003700">
    <property type="term" value="F:DNA-binding transcription factor activity"/>
    <property type="evidence" value="ECO:0000314"/>
    <property type="project" value="UniProtKB"/>
</dbReference>
<dbReference type="GO" id="GO:0000976">
    <property type="term" value="F:transcription cis-regulatory region binding"/>
    <property type="evidence" value="ECO:0007669"/>
    <property type="project" value="TreeGrafter"/>
</dbReference>
<dbReference type="GO" id="GO:0045892">
    <property type="term" value="P:negative regulation of DNA-templated transcription"/>
    <property type="evidence" value="ECO:0000314"/>
    <property type="project" value="UniProtKB"/>
</dbReference>
<dbReference type="GO" id="GO:0042174">
    <property type="term" value="P:negative regulation of sporulation resulting in formation of a cellular spore"/>
    <property type="evidence" value="ECO:0000303"/>
    <property type="project" value="UniProtKB"/>
</dbReference>
<dbReference type="GO" id="GO:0030435">
    <property type="term" value="P:sporulation resulting in formation of a cellular spore"/>
    <property type="evidence" value="ECO:0007669"/>
    <property type="project" value="UniProtKB-KW"/>
</dbReference>
<dbReference type="GO" id="GO:0019872">
    <property type="term" value="P:streptomycin biosynthetic process"/>
    <property type="evidence" value="ECO:0000303"/>
    <property type="project" value="UniProtKB"/>
</dbReference>
<dbReference type="FunFam" id="1.10.357.10:FF:000029">
    <property type="entry name" value="TetR family transcriptional regulator"/>
    <property type="match status" value="1"/>
</dbReference>
<dbReference type="Gene3D" id="1.10.357.10">
    <property type="entry name" value="Tetracycline Repressor, domain 2"/>
    <property type="match status" value="1"/>
</dbReference>
<dbReference type="InterPro" id="IPR047923">
    <property type="entry name" value="ArpA-like"/>
</dbReference>
<dbReference type="InterPro" id="IPR054126">
    <property type="entry name" value="CprB_TetR_C"/>
</dbReference>
<dbReference type="InterPro" id="IPR009057">
    <property type="entry name" value="Homeodomain-like_sf"/>
</dbReference>
<dbReference type="InterPro" id="IPR050109">
    <property type="entry name" value="HTH-type_TetR-like_transc_reg"/>
</dbReference>
<dbReference type="InterPro" id="IPR001647">
    <property type="entry name" value="HTH_TetR"/>
</dbReference>
<dbReference type="InterPro" id="IPR036271">
    <property type="entry name" value="Tet_transcr_reg_TetR-rel_C_sf"/>
</dbReference>
<dbReference type="NCBIfam" id="NF041196">
    <property type="entry name" value="ScbR_bind_reg"/>
    <property type="match status" value="1"/>
</dbReference>
<dbReference type="PANTHER" id="PTHR30055:SF234">
    <property type="entry name" value="HTH-TYPE TRANSCRIPTIONAL REGULATOR BETI"/>
    <property type="match status" value="1"/>
</dbReference>
<dbReference type="PANTHER" id="PTHR30055">
    <property type="entry name" value="HTH-TYPE TRANSCRIPTIONAL REGULATOR RUTR"/>
    <property type="match status" value="1"/>
</dbReference>
<dbReference type="Pfam" id="PF21935">
    <property type="entry name" value="TetR_C_45"/>
    <property type="match status" value="1"/>
</dbReference>
<dbReference type="Pfam" id="PF00440">
    <property type="entry name" value="TetR_N"/>
    <property type="match status" value="1"/>
</dbReference>
<dbReference type="PRINTS" id="PR00455">
    <property type="entry name" value="HTHTETR"/>
</dbReference>
<dbReference type="SUPFAM" id="SSF46689">
    <property type="entry name" value="Homeodomain-like"/>
    <property type="match status" value="1"/>
</dbReference>
<dbReference type="SUPFAM" id="SSF48498">
    <property type="entry name" value="Tetracyclin repressor-like, C-terminal domain"/>
    <property type="match status" value="1"/>
</dbReference>
<dbReference type="PROSITE" id="PS50977">
    <property type="entry name" value="HTH_TETR_2"/>
    <property type="match status" value="1"/>
</dbReference>
<keyword id="KW-0963">Cytoplasm</keyword>
<keyword id="KW-0903">Direct protein sequencing</keyword>
<keyword id="KW-0238">DNA-binding</keyword>
<keyword id="KW-0678">Repressor</keyword>
<keyword id="KW-0749">Sporulation</keyword>
<keyword id="KW-0804">Transcription</keyword>
<keyword id="KW-0805">Transcription regulation</keyword>
<name>AFRP_STRGR</name>
<reference evidence="8" key="1">
    <citation type="journal article" date="1995" name="J. Bacteriol.">
        <title>Cloning and characterization of the A-factor receptor gene from Streptomyces griseus.</title>
        <authorList>
            <person name="Onaka H."/>
            <person name="Ando N."/>
            <person name="Nihira T."/>
            <person name="Yamada Y."/>
            <person name="Beppu T."/>
            <person name="Horinouchi S."/>
        </authorList>
    </citation>
    <scope>NUCLEOTIDE SEQUENCE [GENOMIC DNA]</scope>
    <scope>PROTEIN SEQUENCE OF 6-21; 44-53 AND 148-167</scope>
    <scope>SUBUNIT</scope>
    <scope>INTERACTION WITH A-FACTOR</scope>
    <scope>VARIANTS</scope>
    <source>
        <strain>IFO 13350 / CBS 651.72</strain>
    </source>
</reference>
<reference evidence="8" key="2">
    <citation type="journal article" date="1998" name="Gene">
        <title>Site-directed mutagenesis of the A-factor receptor protein: Val-41 important for DNA-binding and Trp-119 important for ligand-binding.</title>
        <authorList>
            <person name="Sugiyama M."/>
            <person name="Onaka H."/>
            <person name="Nakagawa T."/>
            <person name="Horinouchi S."/>
        </authorList>
    </citation>
    <scope>NUCLEOTIDE SEQUENCE [GENOMIC DNA]</scope>
    <scope>DNA-BINDING</scope>
    <scope>INTERACTION WITH A-FACTOR</scope>
    <scope>MUTAGENESIS OF VAL-41; TRP-119; GLU-135; PRO-138; LYS-147; ILE-149; GLY-155; SER-160; ASP-163; ASP-168 AND PRO-187</scope>
    <source>
        <strain>JA 5142</strain>
    </source>
</reference>
<reference evidence="8" key="3">
    <citation type="journal article" date="1989" name="J. Bacteriol.">
        <title>Detection and properties of A-factor-binding protein from Streptomyces griseus.</title>
        <authorList>
            <person name="Miyake K."/>
            <person name="Horinouchi S."/>
            <person name="Yoshida M."/>
            <person name="Chiba N."/>
            <person name="Mori K."/>
            <person name="Nogawa N."/>
            <person name="Morikawa N."/>
            <person name="Beppu T."/>
        </authorList>
    </citation>
    <scope>SUBCELLULAR LOCATION</scope>
    <scope>INTERACTION WITH A-FACTOR</scope>
</reference>
<reference evidence="8" key="4">
    <citation type="journal article" date="1990" name="J. Bacteriol.">
        <title>The A-factor-binding protein of Streptomyces griseus negatively controls streptomycin production and sporulation.</title>
        <authorList>
            <person name="Miyake K."/>
            <person name="Kuzuyama T."/>
            <person name="Horinouchi S."/>
            <person name="Beppu T."/>
        </authorList>
    </citation>
    <scope>INTERACTION WITH A-FACTOR</scope>
</reference>
<reference evidence="8" key="5">
    <citation type="journal article" date="1997" name="Mol. Microbiol.">
        <title>DNA-binding activity of the A-factor receptor protein and its recognition DNA sequences.</title>
        <authorList>
            <person name="Onaka H."/>
            <person name="Horinouchi S."/>
        </authorList>
    </citation>
    <scope>DNA-BINDING</scope>
    <scope>INTERACTION WITH A-FACTOR</scope>
</reference>
<reference evidence="8" key="6">
    <citation type="journal article" date="1999" name="Mol. Microbiol.">
        <title>The A-factor regulatory cascade leading to streptomycin biosynthesis in Streptomyces griseus: identification of a target gene of the A-factor receptor.</title>
        <authorList>
            <person name="Ohnishi Y."/>
            <person name="Kameyama S."/>
            <person name="Onaka H."/>
            <person name="Horinouchi S."/>
        </authorList>
    </citation>
    <scope>FUNCTION</scope>
</reference>
<reference evidence="8" key="7">
    <citation type="journal article" date="1997" name="J. Bacteriol.">
        <title>A mutation at proline-115 in the A-factor receptor protein of Streptomyces griseus abolishes DNA-binding ability but not ligand-binding ability.</title>
        <authorList>
            <person name="Onaka H."/>
            <person name="Sugiyama M."/>
            <person name="Horinouchi S."/>
        </authorList>
    </citation>
    <scope>MUTANT HO1</scope>
</reference>
<sequence length="276" mass="28950">MAKQARAVQTWRSIVDAAASVFDDYGYERAAISEILRRAKVTKGALYFHFASKEAIAQAIMDEQTSTVEFEQEGSPLQSLVDGGQQFAFALRHNSMARAGTRLSIEGVFLGGPHPWGDWIDATARMLELGQERGEVFPQIDPMVSAKIIVASFTGIQLVSEADSGRADLRGQVAEMWRHILPSIAHPGVIAHIKPEGRVDLAAQAREKAEREEQEARIAAEAKGAGSDAATDSGSRSGGSGLRGGGSGRGPRAGGAGDEGDEEPAGAGVAAGGVVA</sequence>
<evidence type="ECO:0000255" key="1">
    <source>
        <dbReference type="PROSITE-ProRule" id="PRU00335"/>
    </source>
</evidence>
<evidence type="ECO:0000256" key="2">
    <source>
        <dbReference type="SAM" id="MobiDB-lite"/>
    </source>
</evidence>
<evidence type="ECO:0000269" key="3">
    <source>
    </source>
</evidence>
<evidence type="ECO:0000269" key="4">
    <source>
    </source>
</evidence>
<evidence type="ECO:0000269" key="5">
    <source>
    </source>
</evidence>
<evidence type="ECO:0000269" key="6">
    <source>
    </source>
</evidence>
<evidence type="ECO:0000303" key="7">
    <source>
    </source>
</evidence>
<evidence type="ECO:0000305" key="8"/>
<evidence type="ECO:0000312" key="9">
    <source>
        <dbReference type="EMBL" id="BAA36282.1"/>
    </source>
</evidence>
<protein>
    <recommendedName>
        <fullName>A-factor receptor protein</fullName>
    </recommendedName>
    <alternativeName>
        <fullName>A-factor-binding protein</fullName>
    </alternativeName>
</protein>